<gene>
    <name type="primary">Rps13</name>
</gene>
<comment type="function">
    <text evidence="1 2">Component of the small ribosomal subunit (PubMed:36517592). The ribosome is a large ribonucleoprotein complex responsible for the synthesis of proteins in the cell (PubMed:36517592). Part of the small subunit (SSU) processome, first precursor of the small eukaryotic ribosomal subunit. During the assembly of the SSU processome in the nucleolus, many ribosome biogenesis factors, an RNA chaperone and ribosomal proteins associate with the nascent pre-rRNA and work in concert to generate RNA folding, modifications, rearrangements and cleavage as well as targeted degradation of pre-ribosomal RNA by the RNA exosome (By similarity).</text>
</comment>
<comment type="subunit">
    <text evidence="1 2">Component of the small ribosomal subunit. Part of the small subunit (SSU) processome, composed of more than 70 proteins and the RNA chaperone small nucleolar RNA (snoRNA) U3 (By similarity).</text>
</comment>
<comment type="subcellular location">
    <subcellularLocation>
        <location evidence="2">Cytoplasm</location>
    </subcellularLocation>
    <subcellularLocation>
        <location evidence="1">Nucleus</location>
        <location evidence="1">Nucleolus</location>
    </subcellularLocation>
</comment>
<comment type="PTM">
    <text evidence="1">Ubiquitinated at Lys-27 by RNF14 and RNF25 in response to ribosome collisions (ribosome stalling).</text>
</comment>
<comment type="similarity">
    <text evidence="3">Belongs to the universal ribosomal protein uS15 family.</text>
</comment>
<protein>
    <recommendedName>
        <fullName evidence="3">Small ribosomal subunit protein uS15</fullName>
    </recommendedName>
    <alternativeName>
        <fullName>40S ribosomal protein S13</fullName>
    </alternativeName>
</protein>
<accession>P62301</accession>
<organism>
    <name type="scientific">Mus musculus</name>
    <name type="common">Mouse</name>
    <dbReference type="NCBI Taxonomy" id="10090"/>
    <lineage>
        <taxon>Eukaryota</taxon>
        <taxon>Metazoa</taxon>
        <taxon>Chordata</taxon>
        <taxon>Craniata</taxon>
        <taxon>Vertebrata</taxon>
        <taxon>Euteleostomi</taxon>
        <taxon>Mammalia</taxon>
        <taxon>Eutheria</taxon>
        <taxon>Euarchontoglires</taxon>
        <taxon>Glires</taxon>
        <taxon>Rodentia</taxon>
        <taxon>Myomorpha</taxon>
        <taxon>Muroidea</taxon>
        <taxon>Muridae</taxon>
        <taxon>Murinae</taxon>
        <taxon>Mus</taxon>
        <taxon>Mus</taxon>
    </lineage>
</organism>
<reference key="1">
    <citation type="journal article" date="2005" name="Science">
        <title>The transcriptional landscape of the mammalian genome.</title>
        <authorList>
            <person name="Carninci P."/>
            <person name="Kasukawa T."/>
            <person name="Katayama S."/>
            <person name="Gough J."/>
            <person name="Frith M.C."/>
            <person name="Maeda N."/>
            <person name="Oyama R."/>
            <person name="Ravasi T."/>
            <person name="Lenhard B."/>
            <person name="Wells C."/>
            <person name="Kodzius R."/>
            <person name="Shimokawa K."/>
            <person name="Bajic V.B."/>
            <person name="Brenner S.E."/>
            <person name="Batalov S."/>
            <person name="Forrest A.R."/>
            <person name="Zavolan M."/>
            <person name="Davis M.J."/>
            <person name="Wilming L.G."/>
            <person name="Aidinis V."/>
            <person name="Allen J.E."/>
            <person name="Ambesi-Impiombato A."/>
            <person name="Apweiler R."/>
            <person name="Aturaliya R.N."/>
            <person name="Bailey T.L."/>
            <person name="Bansal M."/>
            <person name="Baxter L."/>
            <person name="Beisel K.W."/>
            <person name="Bersano T."/>
            <person name="Bono H."/>
            <person name="Chalk A.M."/>
            <person name="Chiu K.P."/>
            <person name="Choudhary V."/>
            <person name="Christoffels A."/>
            <person name="Clutterbuck D.R."/>
            <person name="Crowe M.L."/>
            <person name="Dalla E."/>
            <person name="Dalrymple B.P."/>
            <person name="de Bono B."/>
            <person name="Della Gatta G."/>
            <person name="di Bernardo D."/>
            <person name="Down T."/>
            <person name="Engstrom P."/>
            <person name="Fagiolini M."/>
            <person name="Faulkner G."/>
            <person name="Fletcher C.F."/>
            <person name="Fukushima T."/>
            <person name="Furuno M."/>
            <person name="Futaki S."/>
            <person name="Gariboldi M."/>
            <person name="Georgii-Hemming P."/>
            <person name="Gingeras T.R."/>
            <person name="Gojobori T."/>
            <person name="Green R.E."/>
            <person name="Gustincich S."/>
            <person name="Harbers M."/>
            <person name="Hayashi Y."/>
            <person name="Hensch T.K."/>
            <person name="Hirokawa N."/>
            <person name="Hill D."/>
            <person name="Huminiecki L."/>
            <person name="Iacono M."/>
            <person name="Ikeo K."/>
            <person name="Iwama A."/>
            <person name="Ishikawa T."/>
            <person name="Jakt M."/>
            <person name="Kanapin A."/>
            <person name="Katoh M."/>
            <person name="Kawasawa Y."/>
            <person name="Kelso J."/>
            <person name="Kitamura H."/>
            <person name="Kitano H."/>
            <person name="Kollias G."/>
            <person name="Krishnan S.P."/>
            <person name="Kruger A."/>
            <person name="Kummerfeld S.K."/>
            <person name="Kurochkin I.V."/>
            <person name="Lareau L.F."/>
            <person name="Lazarevic D."/>
            <person name="Lipovich L."/>
            <person name="Liu J."/>
            <person name="Liuni S."/>
            <person name="McWilliam S."/>
            <person name="Madan Babu M."/>
            <person name="Madera M."/>
            <person name="Marchionni L."/>
            <person name="Matsuda H."/>
            <person name="Matsuzawa S."/>
            <person name="Miki H."/>
            <person name="Mignone F."/>
            <person name="Miyake S."/>
            <person name="Morris K."/>
            <person name="Mottagui-Tabar S."/>
            <person name="Mulder N."/>
            <person name="Nakano N."/>
            <person name="Nakauchi H."/>
            <person name="Ng P."/>
            <person name="Nilsson R."/>
            <person name="Nishiguchi S."/>
            <person name="Nishikawa S."/>
            <person name="Nori F."/>
            <person name="Ohara O."/>
            <person name="Okazaki Y."/>
            <person name="Orlando V."/>
            <person name="Pang K.C."/>
            <person name="Pavan W.J."/>
            <person name="Pavesi G."/>
            <person name="Pesole G."/>
            <person name="Petrovsky N."/>
            <person name="Piazza S."/>
            <person name="Reed J."/>
            <person name="Reid J.F."/>
            <person name="Ring B.Z."/>
            <person name="Ringwald M."/>
            <person name="Rost B."/>
            <person name="Ruan Y."/>
            <person name="Salzberg S.L."/>
            <person name="Sandelin A."/>
            <person name="Schneider C."/>
            <person name="Schoenbach C."/>
            <person name="Sekiguchi K."/>
            <person name="Semple C.A."/>
            <person name="Seno S."/>
            <person name="Sessa L."/>
            <person name="Sheng Y."/>
            <person name="Shibata Y."/>
            <person name="Shimada H."/>
            <person name="Shimada K."/>
            <person name="Silva D."/>
            <person name="Sinclair B."/>
            <person name="Sperling S."/>
            <person name="Stupka E."/>
            <person name="Sugiura K."/>
            <person name="Sultana R."/>
            <person name="Takenaka Y."/>
            <person name="Taki K."/>
            <person name="Tammoja K."/>
            <person name="Tan S.L."/>
            <person name="Tang S."/>
            <person name="Taylor M.S."/>
            <person name="Tegner J."/>
            <person name="Teichmann S.A."/>
            <person name="Ueda H.R."/>
            <person name="van Nimwegen E."/>
            <person name="Verardo R."/>
            <person name="Wei C.L."/>
            <person name="Yagi K."/>
            <person name="Yamanishi H."/>
            <person name="Zabarovsky E."/>
            <person name="Zhu S."/>
            <person name="Zimmer A."/>
            <person name="Hide W."/>
            <person name="Bult C."/>
            <person name="Grimmond S.M."/>
            <person name="Teasdale R.D."/>
            <person name="Liu E.T."/>
            <person name="Brusic V."/>
            <person name="Quackenbush J."/>
            <person name="Wahlestedt C."/>
            <person name="Mattick J.S."/>
            <person name="Hume D.A."/>
            <person name="Kai C."/>
            <person name="Sasaki D."/>
            <person name="Tomaru Y."/>
            <person name="Fukuda S."/>
            <person name="Kanamori-Katayama M."/>
            <person name="Suzuki M."/>
            <person name="Aoki J."/>
            <person name="Arakawa T."/>
            <person name="Iida J."/>
            <person name="Imamura K."/>
            <person name="Itoh M."/>
            <person name="Kato T."/>
            <person name="Kawaji H."/>
            <person name="Kawagashira N."/>
            <person name="Kawashima T."/>
            <person name="Kojima M."/>
            <person name="Kondo S."/>
            <person name="Konno H."/>
            <person name="Nakano K."/>
            <person name="Ninomiya N."/>
            <person name="Nishio T."/>
            <person name="Okada M."/>
            <person name="Plessy C."/>
            <person name="Shibata K."/>
            <person name="Shiraki T."/>
            <person name="Suzuki S."/>
            <person name="Tagami M."/>
            <person name="Waki K."/>
            <person name="Watahiki A."/>
            <person name="Okamura-Oho Y."/>
            <person name="Suzuki H."/>
            <person name="Kawai J."/>
            <person name="Hayashizaki Y."/>
        </authorList>
    </citation>
    <scope>NUCLEOTIDE SEQUENCE [LARGE SCALE MRNA]</scope>
    <source>
        <strain>C57BL/6J</strain>
        <tissue>Kidney</tissue>
    </source>
</reference>
<reference key="2">
    <citation type="journal article" date="2010" name="Cell">
        <title>A tissue-specific atlas of mouse protein phosphorylation and expression.</title>
        <authorList>
            <person name="Huttlin E.L."/>
            <person name="Jedrychowski M.P."/>
            <person name="Elias J.E."/>
            <person name="Goswami T."/>
            <person name="Rad R."/>
            <person name="Beausoleil S.A."/>
            <person name="Villen J."/>
            <person name="Haas W."/>
            <person name="Sowa M.E."/>
            <person name="Gygi S.P."/>
        </authorList>
    </citation>
    <scope>IDENTIFICATION BY MASS SPECTROMETRY [LARGE SCALE ANALYSIS]</scope>
    <source>
        <tissue>Brain</tissue>
        <tissue>Brown adipose tissue</tissue>
        <tissue>Heart</tissue>
        <tissue>Kidney</tissue>
        <tissue>Liver</tissue>
        <tissue>Lung</tissue>
        <tissue>Pancreas</tissue>
        <tissue>Spleen</tissue>
        <tissue>Testis</tissue>
    </source>
</reference>
<reference key="3">
    <citation type="journal article" date="2013" name="Mol. Cell">
        <title>SIRT5-mediated lysine desuccinylation impacts diverse metabolic pathways.</title>
        <authorList>
            <person name="Park J."/>
            <person name="Chen Y."/>
            <person name="Tishkoff D.X."/>
            <person name="Peng C."/>
            <person name="Tan M."/>
            <person name="Dai L."/>
            <person name="Xie Z."/>
            <person name="Zhang Y."/>
            <person name="Zwaans B.M."/>
            <person name="Skinner M.E."/>
            <person name="Lombard D.B."/>
            <person name="Zhao Y."/>
        </authorList>
    </citation>
    <scope>SUCCINYLATION [LARGE SCALE ANALYSIS] AT LYS-27 AND LYS-34</scope>
    <scope>IDENTIFICATION BY MASS SPECTROMETRY [LARGE SCALE ANALYSIS]</scope>
    <source>
        <tissue>Liver</tissue>
    </source>
</reference>
<reference evidence="4 5" key="4">
    <citation type="journal article" date="2022" name="Nature">
        <title>A male germ-cell-specific ribosome controls male fertility.</title>
        <authorList>
            <person name="Li H."/>
            <person name="Huo Y."/>
            <person name="He X."/>
            <person name="Yao L."/>
            <person name="Zhang H."/>
            <person name="Cui Y."/>
            <person name="Xiao H."/>
            <person name="Xie W."/>
            <person name="Zhang D."/>
            <person name="Wang Y."/>
            <person name="Zhang S."/>
            <person name="Tu H."/>
            <person name="Cheng Y."/>
            <person name="Guo Y."/>
            <person name="Cao X."/>
            <person name="Zhu Y."/>
            <person name="Jiang T."/>
            <person name="Guo X."/>
            <person name="Qin Y."/>
            <person name="Sha J."/>
        </authorList>
    </citation>
    <scope>STRUCTURE BY ELECTRON MICROSCOPY (3.03 ANGSTROMS) OF RIBOSOME</scope>
    <scope>FUNCTION</scope>
    <scope>SUBUNIT</scope>
    <scope>SUBCELLULAR LOCATION</scope>
</reference>
<proteinExistence type="evidence at protein level"/>
<sequence length="151" mass="17222">MGRMHAPGKGLSQSALPYRRSVPTWLKLTSDDVKEQIYKLAKKGLTPSQIGVILRDSHGVAQVRFVTGNKILRILKSKGLAPDLPEDLYHLIKKAVAVRKHLERNRKDKDAKFRLILIESRIHRLARYYKTKRVLPPNWKYESSTASALVA</sequence>
<feature type="chain" id="PRO_0000115662" description="Small ribosomal subunit protein uS15">
    <location>
        <begin position="1"/>
        <end position="151"/>
    </location>
</feature>
<feature type="modified residue" description="N6-acetyllysine; alternate" evidence="1">
    <location>
        <position position="27"/>
    </location>
</feature>
<feature type="modified residue" description="N6-succinyllysine; alternate" evidence="6">
    <location>
        <position position="27"/>
    </location>
</feature>
<feature type="modified residue" description="Phosphoserine" evidence="1">
    <location>
        <position position="30"/>
    </location>
</feature>
<feature type="modified residue" description="N6-succinyllysine" evidence="6">
    <location>
        <position position="34"/>
    </location>
</feature>
<feature type="modified residue" description="Phosphotyrosine" evidence="1">
    <location>
        <position position="38"/>
    </location>
</feature>
<feature type="cross-link" description="Glycyl lysine isopeptide (Lys-Gly) (interchain with G-Cter in ubiquitin)" evidence="1">
    <location>
        <position position="27"/>
    </location>
</feature>
<feature type="cross-link" description="Glycyl lysine isopeptide (Lys-Gly) (interchain with G-Cter in SUMO2)" evidence="1">
    <location>
        <position position="43"/>
    </location>
</feature>
<dbReference type="EMBL" id="AK012479">
    <property type="protein sequence ID" value="BAB28268.1"/>
    <property type="molecule type" value="mRNA"/>
</dbReference>
<dbReference type="EMBL" id="AK018703">
    <property type="protein sequence ID" value="BAB31354.1"/>
    <property type="molecule type" value="mRNA"/>
</dbReference>
<dbReference type="EMBL" id="AK076060">
    <property type="protein sequence ID" value="BAC36154.1"/>
    <property type="molecule type" value="mRNA"/>
</dbReference>
<dbReference type="CCDS" id="CCDS52370.1"/>
<dbReference type="RefSeq" id="NP_080809.1">
    <property type="nucleotide sequence ID" value="NM_026533.3"/>
</dbReference>
<dbReference type="PDB" id="7CPU">
    <property type="method" value="EM"/>
    <property type="resolution" value="2.82 A"/>
    <property type="chains" value="SN=1-151"/>
</dbReference>
<dbReference type="PDB" id="7CPV">
    <property type="method" value="EM"/>
    <property type="resolution" value="3.03 A"/>
    <property type="chains" value="SN=1-151"/>
</dbReference>
<dbReference type="PDB" id="7LS1">
    <property type="method" value="EM"/>
    <property type="resolution" value="3.30 A"/>
    <property type="chains" value="N3=1-151"/>
</dbReference>
<dbReference type="PDB" id="7LS2">
    <property type="method" value="EM"/>
    <property type="resolution" value="3.10 A"/>
    <property type="chains" value="N3=1-151"/>
</dbReference>
<dbReference type="PDBsum" id="7CPU"/>
<dbReference type="PDBsum" id="7CPV"/>
<dbReference type="PDBsum" id="7LS1"/>
<dbReference type="PDBsum" id="7LS2"/>
<dbReference type="EMDB" id="EMD-23500"/>
<dbReference type="EMDB" id="EMD-23501"/>
<dbReference type="EMDB" id="EMD-30432"/>
<dbReference type="EMDB" id="EMD-30433"/>
<dbReference type="SMR" id="P62301"/>
<dbReference type="BioGRID" id="212630">
    <property type="interactions" value="103"/>
</dbReference>
<dbReference type="ComplexPortal" id="CPX-5261">
    <property type="entry name" value="40S cytosolic small ribosomal subunit"/>
</dbReference>
<dbReference type="DIP" id="DIP-59976N"/>
<dbReference type="FunCoup" id="P62301">
    <property type="interactions" value="2393"/>
</dbReference>
<dbReference type="IntAct" id="P62301">
    <property type="interactions" value="3"/>
</dbReference>
<dbReference type="STRING" id="10090.ENSMUSP00000126294"/>
<dbReference type="GlyGen" id="P62301">
    <property type="glycosylation" value="1 site, 1 O-linked glycan (1 site)"/>
</dbReference>
<dbReference type="iPTMnet" id="P62301"/>
<dbReference type="PhosphoSitePlus" id="P62301"/>
<dbReference type="SwissPalm" id="P62301"/>
<dbReference type="jPOST" id="P62301"/>
<dbReference type="PaxDb" id="10090-ENSMUSP00000126294"/>
<dbReference type="PeptideAtlas" id="P62301"/>
<dbReference type="ProteomicsDB" id="299936"/>
<dbReference type="Pumba" id="P62301"/>
<dbReference type="Antibodypedia" id="42458">
    <property type="antibodies" value="236 antibodies from 29 providers"/>
</dbReference>
<dbReference type="DNASU" id="68052"/>
<dbReference type="Ensembl" id="ENSMUST00000170953.3">
    <property type="protein sequence ID" value="ENSMUSP00000126294.2"/>
    <property type="gene ID" value="ENSMUSG00000090862.4"/>
</dbReference>
<dbReference type="GeneID" id="68052"/>
<dbReference type="KEGG" id="mmu:68052"/>
<dbReference type="UCSC" id="uc009jje.2">
    <property type="organism name" value="mouse"/>
</dbReference>
<dbReference type="AGR" id="MGI:1915302"/>
<dbReference type="CTD" id="6207"/>
<dbReference type="MGI" id="MGI:1915302">
    <property type="gene designation" value="Rps13"/>
</dbReference>
<dbReference type="VEuPathDB" id="HostDB:ENSMUSG00000090862"/>
<dbReference type="eggNOG" id="KOG0400">
    <property type="taxonomic scope" value="Eukaryota"/>
</dbReference>
<dbReference type="GeneTree" id="ENSGT00390000017491"/>
<dbReference type="HOGENOM" id="CLU_090139_1_0_1"/>
<dbReference type="InParanoid" id="P62301"/>
<dbReference type="OMA" id="MHTRRKG"/>
<dbReference type="OrthoDB" id="623277at2759"/>
<dbReference type="PhylomeDB" id="P62301"/>
<dbReference type="TreeFam" id="TF300190"/>
<dbReference type="Reactome" id="R-MMU-156827">
    <property type="pathway name" value="L13a-mediated translational silencing of Ceruloplasmin expression"/>
</dbReference>
<dbReference type="Reactome" id="R-MMU-1799339">
    <property type="pathway name" value="SRP-dependent cotranslational protein targeting to membrane"/>
</dbReference>
<dbReference type="Reactome" id="R-MMU-6791226">
    <property type="pathway name" value="Major pathway of rRNA processing in the nucleolus and cytosol"/>
</dbReference>
<dbReference type="Reactome" id="R-MMU-72649">
    <property type="pathway name" value="Translation initiation complex formation"/>
</dbReference>
<dbReference type="Reactome" id="R-MMU-72689">
    <property type="pathway name" value="Formation of a pool of free 40S subunits"/>
</dbReference>
<dbReference type="Reactome" id="R-MMU-72695">
    <property type="pathway name" value="Formation of the ternary complex, and subsequently, the 43S complex"/>
</dbReference>
<dbReference type="Reactome" id="R-MMU-72702">
    <property type="pathway name" value="Ribosomal scanning and start codon recognition"/>
</dbReference>
<dbReference type="Reactome" id="R-MMU-72706">
    <property type="pathway name" value="GTP hydrolysis and joining of the 60S ribosomal subunit"/>
</dbReference>
<dbReference type="Reactome" id="R-MMU-975956">
    <property type="pathway name" value="Nonsense Mediated Decay (NMD) independent of the Exon Junction Complex (EJC)"/>
</dbReference>
<dbReference type="Reactome" id="R-MMU-975957">
    <property type="pathway name" value="Nonsense Mediated Decay (NMD) enhanced by the Exon Junction Complex (EJC)"/>
</dbReference>
<dbReference type="BioGRID-ORCS" id="68052">
    <property type="hits" value="27 hits in 72 CRISPR screens"/>
</dbReference>
<dbReference type="ChiTaRS" id="Rps13">
    <property type="organism name" value="mouse"/>
</dbReference>
<dbReference type="PRO" id="PR:P62301"/>
<dbReference type="Proteomes" id="UP000000589">
    <property type="component" value="Chromosome 7"/>
</dbReference>
<dbReference type="RNAct" id="P62301">
    <property type="molecule type" value="protein"/>
</dbReference>
<dbReference type="Bgee" id="ENSMUSG00000090862">
    <property type="expression patterns" value="Expressed in epiblast (generic) and 66 other cell types or tissues"/>
</dbReference>
<dbReference type="ExpressionAtlas" id="P62301">
    <property type="expression patterns" value="baseline and differential"/>
</dbReference>
<dbReference type="GO" id="GO:0005737">
    <property type="term" value="C:cytoplasm"/>
    <property type="evidence" value="ECO:0000303"/>
    <property type="project" value="ComplexPortal"/>
</dbReference>
<dbReference type="GO" id="GO:0005829">
    <property type="term" value="C:cytosol"/>
    <property type="evidence" value="ECO:0000304"/>
    <property type="project" value="Reactome"/>
</dbReference>
<dbReference type="GO" id="GO:0022627">
    <property type="term" value="C:cytosolic small ribosomal subunit"/>
    <property type="evidence" value="ECO:0000314"/>
    <property type="project" value="UniProtKB"/>
</dbReference>
<dbReference type="GO" id="GO:0005730">
    <property type="term" value="C:nucleolus"/>
    <property type="evidence" value="ECO:0007669"/>
    <property type="project" value="UniProtKB-SubCell"/>
</dbReference>
<dbReference type="GO" id="GO:0014069">
    <property type="term" value="C:postsynaptic density"/>
    <property type="evidence" value="ECO:0007669"/>
    <property type="project" value="Ensembl"/>
</dbReference>
<dbReference type="GO" id="GO:0032040">
    <property type="term" value="C:small-subunit processome"/>
    <property type="evidence" value="ECO:0000250"/>
    <property type="project" value="UniProtKB"/>
</dbReference>
<dbReference type="GO" id="GO:0048027">
    <property type="term" value="F:mRNA 5'-UTR binding"/>
    <property type="evidence" value="ECO:0007669"/>
    <property type="project" value="Ensembl"/>
</dbReference>
<dbReference type="GO" id="GO:0003735">
    <property type="term" value="F:structural constituent of ribosome"/>
    <property type="evidence" value="ECO:0000314"/>
    <property type="project" value="UniProtKB"/>
</dbReference>
<dbReference type="GO" id="GO:0002181">
    <property type="term" value="P:cytoplasmic translation"/>
    <property type="evidence" value="ECO:0000303"/>
    <property type="project" value="ComplexPortal"/>
</dbReference>
<dbReference type="GO" id="GO:0033119">
    <property type="term" value="P:negative regulation of RNA splicing"/>
    <property type="evidence" value="ECO:0007669"/>
    <property type="project" value="Ensembl"/>
</dbReference>
<dbReference type="GO" id="GO:0042274">
    <property type="term" value="P:ribosomal small subunit biogenesis"/>
    <property type="evidence" value="ECO:0000250"/>
    <property type="project" value="UniProtKB"/>
</dbReference>
<dbReference type="CDD" id="cd00353">
    <property type="entry name" value="Ribosomal_S15p_S13e"/>
    <property type="match status" value="1"/>
</dbReference>
<dbReference type="FunFam" id="1.10.287.10:FF:000003">
    <property type="entry name" value="40S ribosomal protein S13"/>
    <property type="match status" value="1"/>
</dbReference>
<dbReference type="FunFam" id="4.10.860.130:FF:000001">
    <property type="entry name" value="40S ribosomal protein S13"/>
    <property type="match status" value="1"/>
</dbReference>
<dbReference type="Gene3D" id="4.10.860.130">
    <property type="match status" value="1"/>
</dbReference>
<dbReference type="Gene3D" id="1.10.287.10">
    <property type="entry name" value="S15/NS1, RNA-binding"/>
    <property type="match status" value="1"/>
</dbReference>
<dbReference type="HAMAP" id="MF_01343_A">
    <property type="entry name" value="Ribosomal_uS15_A"/>
    <property type="match status" value="1"/>
</dbReference>
<dbReference type="InterPro" id="IPR000589">
    <property type="entry name" value="Ribosomal_uS15"/>
</dbReference>
<dbReference type="InterPro" id="IPR023029">
    <property type="entry name" value="Ribosomal_uS15_arc_euk"/>
</dbReference>
<dbReference type="InterPro" id="IPR012606">
    <property type="entry name" value="Ribosomal_uS15_N"/>
</dbReference>
<dbReference type="InterPro" id="IPR009068">
    <property type="entry name" value="uS15_NS1_RNA-bd_sf"/>
</dbReference>
<dbReference type="NCBIfam" id="NF006331">
    <property type="entry name" value="PRK08561.1"/>
    <property type="match status" value="1"/>
</dbReference>
<dbReference type="PANTHER" id="PTHR11885">
    <property type="entry name" value="RIBOSOMAL PROTEIN S15P/S13E"/>
    <property type="match status" value="1"/>
</dbReference>
<dbReference type="PANTHER" id="PTHR11885:SF6">
    <property type="entry name" value="SMALL RIBOSOMAL SUBUNIT PROTEIN US15"/>
    <property type="match status" value="1"/>
</dbReference>
<dbReference type="Pfam" id="PF08069">
    <property type="entry name" value="Ribosomal_S13_N"/>
    <property type="match status" value="1"/>
</dbReference>
<dbReference type="Pfam" id="PF00312">
    <property type="entry name" value="Ribosomal_S15"/>
    <property type="match status" value="1"/>
</dbReference>
<dbReference type="SMART" id="SM01386">
    <property type="entry name" value="Ribosomal_S13_N"/>
    <property type="match status" value="1"/>
</dbReference>
<dbReference type="SMART" id="SM01387">
    <property type="entry name" value="Ribosomal_S15"/>
    <property type="match status" value="1"/>
</dbReference>
<dbReference type="SUPFAM" id="SSF47060">
    <property type="entry name" value="S15/NS1 RNA-binding domain"/>
    <property type="match status" value="1"/>
</dbReference>
<dbReference type="PROSITE" id="PS00362">
    <property type="entry name" value="RIBOSOMAL_S15"/>
    <property type="match status" value="1"/>
</dbReference>
<keyword id="KW-0002">3D-structure</keyword>
<keyword id="KW-0007">Acetylation</keyword>
<keyword id="KW-0963">Cytoplasm</keyword>
<keyword id="KW-1017">Isopeptide bond</keyword>
<keyword id="KW-0539">Nucleus</keyword>
<keyword id="KW-0597">Phosphoprotein</keyword>
<keyword id="KW-1185">Reference proteome</keyword>
<keyword id="KW-0687">Ribonucleoprotein</keyword>
<keyword id="KW-0689">Ribosomal protein</keyword>
<keyword id="KW-0832">Ubl conjugation</keyword>
<name>RS13_MOUSE</name>
<evidence type="ECO:0000250" key="1">
    <source>
        <dbReference type="UniProtKB" id="P62277"/>
    </source>
</evidence>
<evidence type="ECO:0000269" key="2">
    <source>
    </source>
</evidence>
<evidence type="ECO:0000305" key="3"/>
<evidence type="ECO:0007744" key="4">
    <source>
        <dbReference type="PDB" id="7CPU"/>
    </source>
</evidence>
<evidence type="ECO:0007744" key="5">
    <source>
        <dbReference type="PDB" id="7CPV"/>
    </source>
</evidence>
<evidence type="ECO:0007744" key="6">
    <source>
    </source>
</evidence>